<keyword id="KW-0963">Cytoplasm</keyword>
<keyword id="KW-1185">Reference proteome</keyword>
<sequence>MFGQRQSMIVYLHSLKHAKILRKYGNIHYISKRLKYAVVYCDMEQIEHMMHKLNKLPFVKKIEQSYRPYLKTEFENSRPDRAKEYDYS</sequence>
<proteinExistence type="inferred from homology"/>
<feature type="chain" id="PRO_0000074651" description="UPF0298 protein BC_3932">
    <location>
        <begin position="1"/>
        <end position="88"/>
    </location>
</feature>
<evidence type="ECO:0000255" key="1">
    <source>
        <dbReference type="HAMAP-Rule" id="MF_01126"/>
    </source>
</evidence>
<protein>
    <recommendedName>
        <fullName evidence="1">UPF0298 protein BC_3932</fullName>
    </recommendedName>
</protein>
<dbReference type="EMBL" id="AE016877">
    <property type="protein sequence ID" value="AAP10852.1"/>
    <property type="molecule type" value="Genomic_DNA"/>
</dbReference>
<dbReference type="RefSeq" id="NP_833651.1">
    <property type="nucleotide sequence ID" value="NC_004722.1"/>
</dbReference>
<dbReference type="RefSeq" id="WP_002082261.1">
    <property type="nucleotide sequence ID" value="NZ_CP138336.1"/>
</dbReference>
<dbReference type="SMR" id="Q812V9"/>
<dbReference type="STRING" id="226900.BC_3932"/>
<dbReference type="KEGG" id="bce:BC3932"/>
<dbReference type="PATRIC" id="fig|226900.8.peg.4056"/>
<dbReference type="HOGENOM" id="CLU_159890_2_0_9"/>
<dbReference type="OrthoDB" id="2990788at2"/>
<dbReference type="Proteomes" id="UP000001417">
    <property type="component" value="Chromosome"/>
</dbReference>
<dbReference type="GO" id="GO:0005737">
    <property type="term" value="C:cytoplasm"/>
    <property type="evidence" value="ECO:0007669"/>
    <property type="project" value="UniProtKB-SubCell"/>
</dbReference>
<dbReference type="HAMAP" id="MF_01126">
    <property type="entry name" value="UPF0298"/>
    <property type="match status" value="1"/>
</dbReference>
<dbReference type="InterPro" id="IPR016979">
    <property type="entry name" value="DUF2129"/>
</dbReference>
<dbReference type="NCBIfam" id="NF002777">
    <property type="entry name" value="PRK02886.1"/>
    <property type="match status" value="1"/>
</dbReference>
<dbReference type="Pfam" id="PF09902">
    <property type="entry name" value="DUF2129"/>
    <property type="match status" value="1"/>
</dbReference>
<dbReference type="PIRSF" id="PIRSF031653">
    <property type="entry name" value="UCP031653"/>
    <property type="match status" value="1"/>
</dbReference>
<comment type="subcellular location">
    <subcellularLocation>
        <location evidence="1">Cytoplasm</location>
    </subcellularLocation>
</comment>
<comment type="similarity">
    <text evidence="1">Belongs to the UPF0298 family.</text>
</comment>
<accession>Q812V9</accession>
<reference key="1">
    <citation type="journal article" date="2003" name="Nature">
        <title>Genome sequence of Bacillus cereus and comparative analysis with Bacillus anthracis.</title>
        <authorList>
            <person name="Ivanova N."/>
            <person name="Sorokin A."/>
            <person name="Anderson I."/>
            <person name="Galleron N."/>
            <person name="Candelon B."/>
            <person name="Kapatral V."/>
            <person name="Bhattacharyya A."/>
            <person name="Reznik G."/>
            <person name="Mikhailova N."/>
            <person name="Lapidus A."/>
            <person name="Chu L."/>
            <person name="Mazur M."/>
            <person name="Goltsman E."/>
            <person name="Larsen N."/>
            <person name="D'Souza M."/>
            <person name="Walunas T."/>
            <person name="Grechkin Y."/>
            <person name="Pusch G."/>
            <person name="Haselkorn R."/>
            <person name="Fonstein M."/>
            <person name="Ehrlich S.D."/>
            <person name="Overbeek R."/>
            <person name="Kyrpides N.C."/>
        </authorList>
    </citation>
    <scope>NUCLEOTIDE SEQUENCE [LARGE SCALE GENOMIC DNA]</scope>
    <source>
        <strain>ATCC 14579 / DSM 31 / CCUG 7414 / JCM 2152 / NBRC 15305 / NCIMB 9373 / NCTC 2599 / NRRL B-3711</strain>
    </source>
</reference>
<gene>
    <name type="ordered locus">BC_3932</name>
</gene>
<name>Y3932_BACCR</name>
<organism>
    <name type="scientific">Bacillus cereus (strain ATCC 14579 / DSM 31 / CCUG 7414 / JCM 2152 / NBRC 15305 / NCIMB 9373 / NCTC 2599 / NRRL B-3711)</name>
    <dbReference type="NCBI Taxonomy" id="226900"/>
    <lineage>
        <taxon>Bacteria</taxon>
        <taxon>Bacillati</taxon>
        <taxon>Bacillota</taxon>
        <taxon>Bacilli</taxon>
        <taxon>Bacillales</taxon>
        <taxon>Bacillaceae</taxon>
        <taxon>Bacillus</taxon>
        <taxon>Bacillus cereus group</taxon>
    </lineage>
</organism>